<reference key="1">
    <citation type="journal article" date="2004" name="Nucleic Acids Res.">
        <title>Genome sequence of Symbiobacterium thermophilum, an uncultivable bacterium that depends on microbial commensalism.</title>
        <authorList>
            <person name="Ueda K."/>
            <person name="Yamashita A."/>
            <person name="Ishikawa J."/>
            <person name="Shimada M."/>
            <person name="Watsuji T."/>
            <person name="Morimura K."/>
            <person name="Ikeda H."/>
            <person name="Hattori M."/>
            <person name="Beppu T."/>
        </authorList>
    </citation>
    <scope>NUCLEOTIDE SEQUENCE [LARGE SCALE GENOMIC DNA]</scope>
    <source>
        <strain>DSM 24528 / JCM 14929 / IAM 14863 / T</strain>
    </source>
</reference>
<name>CLPP2_SYMTH</name>
<keyword id="KW-0963">Cytoplasm</keyword>
<keyword id="KW-0378">Hydrolase</keyword>
<keyword id="KW-0645">Protease</keyword>
<keyword id="KW-1185">Reference proteome</keyword>
<keyword id="KW-0720">Serine protease</keyword>
<accession>Q67QZ4</accession>
<protein>
    <recommendedName>
        <fullName evidence="1">ATP-dependent Clp protease proteolytic subunit 2</fullName>
        <ecNumber evidence="1">3.4.21.92</ecNumber>
    </recommendedName>
    <alternativeName>
        <fullName evidence="1">Endopeptidase Clp 2</fullName>
    </alternativeName>
</protein>
<organism>
    <name type="scientific">Symbiobacterium thermophilum (strain DSM 24528 / JCM 14929 / IAM 14863 / T)</name>
    <dbReference type="NCBI Taxonomy" id="292459"/>
    <lineage>
        <taxon>Bacteria</taxon>
        <taxon>Bacillati</taxon>
        <taxon>Bacillota</taxon>
        <taxon>Clostridia</taxon>
        <taxon>Eubacteriales</taxon>
        <taxon>Symbiobacteriaceae</taxon>
        <taxon>Symbiobacterium</taxon>
    </lineage>
</organism>
<comment type="function">
    <text evidence="1">Cleaves peptides in various proteins in a process that requires ATP hydrolysis. Has a chymotrypsin-like activity. Plays a major role in the degradation of misfolded proteins.</text>
</comment>
<comment type="catalytic activity">
    <reaction evidence="1">
        <text>Hydrolysis of proteins to small peptides in the presence of ATP and magnesium. alpha-casein is the usual test substrate. In the absence of ATP, only oligopeptides shorter than five residues are hydrolyzed (such as succinyl-Leu-Tyr-|-NHMec, and Leu-Tyr-Leu-|-Tyr-Trp, in which cleavage of the -Tyr-|-Leu- and -Tyr-|-Trp bonds also occurs).</text>
        <dbReference type="EC" id="3.4.21.92"/>
    </reaction>
</comment>
<comment type="subunit">
    <text evidence="1">Fourteen ClpP subunits assemble into 2 heptameric rings which stack back to back to give a disk-like structure with a central cavity, resembling the structure of eukaryotic proteasomes.</text>
</comment>
<comment type="subcellular location">
    <subcellularLocation>
        <location evidence="1">Cytoplasm</location>
    </subcellularLocation>
</comment>
<comment type="similarity">
    <text evidence="1">Belongs to the peptidase S14 family.</text>
</comment>
<dbReference type="EC" id="3.4.21.92" evidence="1"/>
<dbReference type="EMBL" id="AP006840">
    <property type="protein sequence ID" value="BAD39899.1"/>
    <property type="molecule type" value="Genomic_DNA"/>
</dbReference>
<dbReference type="RefSeq" id="WP_011195046.1">
    <property type="nucleotide sequence ID" value="NC_006177.1"/>
</dbReference>
<dbReference type="SMR" id="Q67QZ4"/>
<dbReference type="STRING" id="292459.STH914"/>
<dbReference type="MEROPS" id="S14.001"/>
<dbReference type="KEGG" id="sth:STH914"/>
<dbReference type="eggNOG" id="COG0740">
    <property type="taxonomic scope" value="Bacteria"/>
</dbReference>
<dbReference type="HOGENOM" id="CLU_058707_3_2_9"/>
<dbReference type="OrthoDB" id="9802800at2"/>
<dbReference type="Proteomes" id="UP000000417">
    <property type="component" value="Chromosome"/>
</dbReference>
<dbReference type="GO" id="GO:0005737">
    <property type="term" value="C:cytoplasm"/>
    <property type="evidence" value="ECO:0007669"/>
    <property type="project" value="UniProtKB-SubCell"/>
</dbReference>
<dbReference type="GO" id="GO:0009368">
    <property type="term" value="C:endopeptidase Clp complex"/>
    <property type="evidence" value="ECO:0007669"/>
    <property type="project" value="TreeGrafter"/>
</dbReference>
<dbReference type="GO" id="GO:0004176">
    <property type="term" value="F:ATP-dependent peptidase activity"/>
    <property type="evidence" value="ECO:0007669"/>
    <property type="project" value="InterPro"/>
</dbReference>
<dbReference type="GO" id="GO:0051117">
    <property type="term" value="F:ATPase binding"/>
    <property type="evidence" value="ECO:0007669"/>
    <property type="project" value="TreeGrafter"/>
</dbReference>
<dbReference type="GO" id="GO:0004252">
    <property type="term" value="F:serine-type endopeptidase activity"/>
    <property type="evidence" value="ECO:0007669"/>
    <property type="project" value="UniProtKB-UniRule"/>
</dbReference>
<dbReference type="GO" id="GO:0006515">
    <property type="term" value="P:protein quality control for misfolded or incompletely synthesized proteins"/>
    <property type="evidence" value="ECO:0007669"/>
    <property type="project" value="TreeGrafter"/>
</dbReference>
<dbReference type="CDD" id="cd07017">
    <property type="entry name" value="S14_ClpP_2"/>
    <property type="match status" value="1"/>
</dbReference>
<dbReference type="FunFam" id="3.90.226.10:FF:000001">
    <property type="entry name" value="ATP-dependent Clp protease proteolytic subunit"/>
    <property type="match status" value="1"/>
</dbReference>
<dbReference type="Gene3D" id="3.90.226.10">
    <property type="entry name" value="2-enoyl-CoA Hydratase, Chain A, domain 1"/>
    <property type="match status" value="1"/>
</dbReference>
<dbReference type="HAMAP" id="MF_00444">
    <property type="entry name" value="ClpP"/>
    <property type="match status" value="1"/>
</dbReference>
<dbReference type="InterPro" id="IPR001907">
    <property type="entry name" value="ClpP"/>
</dbReference>
<dbReference type="InterPro" id="IPR029045">
    <property type="entry name" value="ClpP/crotonase-like_dom_sf"/>
</dbReference>
<dbReference type="InterPro" id="IPR023562">
    <property type="entry name" value="ClpP/TepA"/>
</dbReference>
<dbReference type="InterPro" id="IPR033135">
    <property type="entry name" value="ClpP_His_AS"/>
</dbReference>
<dbReference type="InterPro" id="IPR018215">
    <property type="entry name" value="ClpP_Ser_AS"/>
</dbReference>
<dbReference type="NCBIfam" id="NF001368">
    <property type="entry name" value="PRK00277.1"/>
    <property type="match status" value="1"/>
</dbReference>
<dbReference type="NCBIfam" id="NF009205">
    <property type="entry name" value="PRK12553.1"/>
    <property type="match status" value="1"/>
</dbReference>
<dbReference type="PANTHER" id="PTHR10381">
    <property type="entry name" value="ATP-DEPENDENT CLP PROTEASE PROTEOLYTIC SUBUNIT"/>
    <property type="match status" value="1"/>
</dbReference>
<dbReference type="PANTHER" id="PTHR10381:SF70">
    <property type="entry name" value="ATP-DEPENDENT CLP PROTEASE PROTEOLYTIC SUBUNIT"/>
    <property type="match status" value="1"/>
</dbReference>
<dbReference type="Pfam" id="PF00574">
    <property type="entry name" value="CLP_protease"/>
    <property type="match status" value="1"/>
</dbReference>
<dbReference type="PRINTS" id="PR00127">
    <property type="entry name" value="CLPPROTEASEP"/>
</dbReference>
<dbReference type="SUPFAM" id="SSF52096">
    <property type="entry name" value="ClpP/crotonase"/>
    <property type="match status" value="1"/>
</dbReference>
<dbReference type="PROSITE" id="PS00382">
    <property type="entry name" value="CLP_PROTEASE_HIS"/>
    <property type="match status" value="1"/>
</dbReference>
<dbReference type="PROSITE" id="PS00381">
    <property type="entry name" value="CLP_PROTEASE_SER"/>
    <property type="match status" value="1"/>
</dbReference>
<feature type="chain" id="PRO_0000179680" description="ATP-dependent Clp protease proteolytic subunit 2">
    <location>
        <begin position="1"/>
        <end position="200"/>
    </location>
</feature>
<feature type="active site" description="Nucleophile" evidence="1">
    <location>
        <position position="99"/>
    </location>
</feature>
<feature type="active site" evidence="1">
    <location>
        <position position="123"/>
    </location>
</feature>
<gene>
    <name evidence="1" type="primary">clpP2</name>
    <name type="ordered locus">STH914</name>
</gene>
<sequence>MSSLIPIVIEQTSRGERSYDIYSRLLKDRIIFLGTSIDDQVANAVTAQLLFLESDDPDKEINMYINSSGGITSAGLAIYDTMQHIKPKVNTYAIGMAASMAAVLLAGGTGTRYALPHARILIHQPWVKGGIGGQVTDIEITAKELLHTKEKLAEIIAKHTGQPLEKVKEDSERDRWMSAEEAKAYGLVDVVVQPRERKKA</sequence>
<proteinExistence type="inferred from homology"/>
<evidence type="ECO:0000255" key="1">
    <source>
        <dbReference type="HAMAP-Rule" id="MF_00444"/>
    </source>
</evidence>